<feature type="chain" id="PRO_0000189368" description="Ferredoxin">
    <location>
        <begin position="1"/>
        <end position="97"/>
    </location>
</feature>
<feature type="domain" description="2Fe-2S ferredoxin-type" evidence="1">
    <location>
        <begin position="3"/>
        <end position="93"/>
    </location>
</feature>
<feature type="binding site" evidence="1">
    <location>
        <position position="39"/>
    </location>
    <ligand>
        <name>[2Fe-2S] cluster</name>
        <dbReference type="ChEBI" id="CHEBI:190135"/>
    </ligand>
</feature>
<feature type="binding site" evidence="1">
    <location>
        <position position="44"/>
    </location>
    <ligand>
        <name>[2Fe-2S] cluster</name>
        <dbReference type="ChEBI" id="CHEBI:190135"/>
    </ligand>
</feature>
<feature type="binding site" evidence="1">
    <location>
        <position position="47"/>
    </location>
    <ligand>
        <name>[2Fe-2S] cluster</name>
        <dbReference type="ChEBI" id="CHEBI:190135"/>
    </ligand>
</feature>
<feature type="binding site" evidence="1">
    <location>
        <position position="77"/>
    </location>
    <ligand>
        <name>[2Fe-2S] cluster</name>
        <dbReference type="ChEBI" id="CHEBI:190135"/>
    </ligand>
</feature>
<comment type="function">
    <text evidence="2">Ferredoxins are iron-sulfur proteins that transfer electrons in a wide variety of metabolic reactions.</text>
</comment>
<comment type="cofactor">
    <cofactor evidence="2">
        <name>[2Fe-2S] cluster</name>
        <dbReference type="ChEBI" id="CHEBI:190135"/>
    </cofactor>
    <text evidence="2">Binds 1 [2Fe-2S] cluster.</text>
</comment>
<comment type="subcellular location">
    <subcellularLocation>
        <location evidence="2">Plastid</location>
        <location evidence="2">Chloroplast</location>
    </subcellularLocation>
</comment>
<comment type="similarity">
    <text evidence="3">Belongs to the 2Fe2S plant-type ferredoxin family.</text>
</comment>
<name>FER_SOLNI</name>
<dbReference type="SMR" id="P83582"/>
<dbReference type="GO" id="GO:0009507">
    <property type="term" value="C:chloroplast"/>
    <property type="evidence" value="ECO:0000304"/>
    <property type="project" value="UniProtKB"/>
</dbReference>
<dbReference type="GO" id="GO:0009570">
    <property type="term" value="C:chloroplast stroma"/>
    <property type="evidence" value="ECO:0007669"/>
    <property type="project" value="TreeGrafter"/>
</dbReference>
<dbReference type="GO" id="GO:0051537">
    <property type="term" value="F:2 iron, 2 sulfur cluster binding"/>
    <property type="evidence" value="ECO:0007669"/>
    <property type="project" value="UniProtKB-KW"/>
</dbReference>
<dbReference type="GO" id="GO:0009055">
    <property type="term" value="F:electron transfer activity"/>
    <property type="evidence" value="ECO:0000304"/>
    <property type="project" value="UniProtKB"/>
</dbReference>
<dbReference type="GO" id="GO:0008198">
    <property type="term" value="F:ferrous iron binding"/>
    <property type="evidence" value="ECO:0000303"/>
    <property type="project" value="UniProtKB"/>
</dbReference>
<dbReference type="GO" id="GO:0022900">
    <property type="term" value="P:electron transport chain"/>
    <property type="evidence" value="ECO:0007669"/>
    <property type="project" value="InterPro"/>
</dbReference>
<dbReference type="GO" id="GO:0006124">
    <property type="term" value="P:ferredoxin metabolic process"/>
    <property type="evidence" value="ECO:0000304"/>
    <property type="project" value="UniProtKB"/>
</dbReference>
<dbReference type="CDD" id="cd00207">
    <property type="entry name" value="fer2"/>
    <property type="match status" value="1"/>
</dbReference>
<dbReference type="FunFam" id="3.10.20.30:FF:000014">
    <property type="entry name" value="Ferredoxin"/>
    <property type="match status" value="1"/>
</dbReference>
<dbReference type="Gene3D" id="3.10.20.30">
    <property type="match status" value="1"/>
</dbReference>
<dbReference type="InterPro" id="IPR036010">
    <property type="entry name" value="2Fe-2S_ferredoxin-like_sf"/>
</dbReference>
<dbReference type="InterPro" id="IPR001041">
    <property type="entry name" value="2Fe-2S_ferredoxin-type"/>
</dbReference>
<dbReference type="InterPro" id="IPR006058">
    <property type="entry name" value="2Fe2S_fd_BS"/>
</dbReference>
<dbReference type="InterPro" id="IPR012675">
    <property type="entry name" value="Beta-grasp_dom_sf"/>
</dbReference>
<dbReference type="InterPro" id="IPR010241">
    <property type="entry name" value="Fd_pln"/>
</dbReference>
<dbReference type="NCBIfam" id="TIGR02008">
    <property type="entry name" value="fdx_plant"/>
    <property type="match status" value="1"/>
</dbReference>
<dbReference type="PANTHER" id="PTHR43112">
    <property type="entry name" value="FERREDOXIN"/>
    <property type="match status" value="1"/>
</dbReference>
<dbReference type="PANTHER" id="PTHR43112:SF3">
    <property type="entry name" value="FERREDOXIN-2, CHLOROPLASTIC"/>
    <property type="match status" value="1"/>
</dbReference>
<dbReference type="Pfam" id="PF00111">
    <property type="entry name" value="Fer2"/>
    <property type="match status" value="1"/>
</dbReference>
<dbReference type="SUPFAM" id="SSF54292">
    <property type="entry name" value="2Fe-2S ferredoxin-like"/>
    <property type="match status" value="1"/>
</dbReference>
<dbReference type="PROSITE" id="PS00197">
    <property type="entry name" value="2FE2S_FER_1"/>
    <property type="match status" value="1"/>
</dbReference>
<dbReference type="PROSITE" id="PS51085">
    <property type="entry name" value="2FE2S_FER_2"/>
    <property type="match status" value="1"/>
</dbReference>
<organism evidence="3">
    <name type="scientific">Solanum nigrum</name>
    <name type="common">Black nightshade</name>
    <dbReference type="NCBI Taxonomy" id="4112"/>
    <lineage>
        <taxon>Eukaryota</taxon>
        <taxon>Viridiplantae</taxon>
        <taxon>Streptophyta</taxon>
        <taxon>Embryophyta</taxon>
        <taxon>Tracheophyta</taxon>
        <taxon>Spermatophyta</taxon>
        <taxon>Magnoliopsida</taxon>
        <taxon>eudicotyledons</taxon>
        <taxon>Gunneridae</taxon>
        <taxon>Pentapetalae</taxon>
        <taxon>asterids</taxon>
        <taxon>lamiids</taxon>
        <taxon>Solanales</taxon>
        <taxon>Solanaceae</taxon>
        <taxon>Solanoideae</taxon>
        <taxon>Solaneae</taxon>
        <taxon>Solanum</taxon>
    </lineage>
</organism>
<protein>
    <recommendedName>
        <fullName>Ferredoxin</fullName>
    </recommendedName>
</protein>
<proteinExistence type="evidence at protein level"/>
<keyword id="KW-0001">2Fe-2S</keyword>
<keyword id="KW-0150">Chloroplast</keyword>
<keyword id="KW-0903">Direct protein sequencing</keyword>
<keyword id="KW-0249">Electron transport</keyword>
<keyword id="KW-0408">Iron</keyword>
<keyword id="KW-0411">Iron-sulfur</keyword>
<keyword id="KW-0479">Metal-binding</keyword>
<keyword id="KW-0934">Plastid</keyword>
<keyword id="KW-0813">Transport</keyword>
<evidence type="ECO:0000255" key="1">
    <source>
        <dbReference type="PROSITE-ProRule" id="PRU00465"/>
    </source>
</evidence>
<evidence type="ECO:0000269" key="2">
    <source>
    </source>
</evidence>
<evidence type="ECO:0000305" key="3"/>
<reference evidence="3" key="1">
    <citation type="journal article" date="2003" name="Phytochemistry">
        <title>Large differences in amino acid sequences among ferredoxins from several species of genus Solanum.</title>
        <authorList>
            <person name="Mino Y."/>
            <person name="Hazama T."/>
            <person name="Machida Y."/>
        </authorList>
    </citation>
    <scope>PROTEIN SEQUENCE</scope>
    <scope>FUNCTION</scope>
    <scope>COFACTOR</scope>
    <scope>SUBCELLULAR LOCATION</scope>
    <source>
        <tissue evidence="2">Leaf</tissue>
    </source>
</reference>
<sequence>ATYKVKLVTPDGPIEFDCPDDVYILDQAEEEGHELPYSCRAGSCSSCAGKVTAGTVDQSDGNFLDDDQMADGFVLTCVAYPKSDVTIETHKEEDLTG</sequence>
<accession>P83582</accession>